<organism>
    <name type="scientific">Parafrankia sp. (strain EAN1pec)</name>
    <dbReference type="NCBI Taxonomy" id="298653"/>
    <lineage>
        <taxon>Bacteria</taxon>
        <taxon>Bacillati</taxon>
        <taxon>Actinomycetota</taxon>
        <taxon>Actinomycetes</taxon>
        <taxon>Frankiales</taxon>
        <taxon>Frankiaceae</taxon>
        <taxon>Parafrankia</taxon>
    </lineage>
</organism>
<dbReference type="EC" id="2.3.1.189" evidence="1"/>
<dbReference type="EMBL" id="CP000820">
    <property type="protein sequence ID" value="ABW15521.1"/>
    <property type="molecule type" value="Genomic_DNA"/>
</dbReference>
<dbReference type="RefSeq" id="WP_020463599.1">
    <property type="nucleotide sequence ID" value="NC_009921.1"/>
</dbReference>
<dbReference type="SMR" id="A8LDL3"/>
<dbReference type="STRING" id="298653.Franean1_6177"/>
<dbReference type="KEGG" id="fre:Franean1_6177"/>
<dbReference type="eggNOG" id="COG0456">
    <property type="taxonomic scope" value="Bacteria"/>
</dbReference>
<dbReference type="HOGENOM" id="CLU_068014_0_0_11"/>
<dbReference type="GO" id="GO:0035447">
    <property type="term" value="F:mycothiol synthase activity"/>
    <property type="evidence" value="ECO:0007669"/>
    <property type="project" value="UniProtKB-UniRule"/>
</dbReference>
<dbReference type="GO" id="GO:0010125">
    <property type="term" value="P:mycothiol biosynthetic process"/>
    <property type="evidence" value="ECO:0007669"/>
    <property type="project" value="UniProtKB-UniRule"/>
</dbReference>
<dbReference type="CDD" id="cd04301">
    <property type="entry name" value="NAT_SF"/>
    <property type="match status" value="1"/>
</dbReference>
<dbReference type="Gene3D" id="3.40.630.30">
    <property type="match status" value="1"/>
</dbReference>
<dbReference type="HAMAP" id="MF_01698">
    <property type="entry name" value="MshD"/>
    <property type="match status" value="1"/>
</dbReference>
<dbReference type="InterPro" id="IPR016181">
    <property type="entry name" value="Acyl_CoA_acyltransferase"/>
</dbReference>
<dbReference type="InterPro" id="IPR050832">
    <property type="entry name" value="Bact_Acetyltransf"/>
</dbReference>
<dbReference type="InterPro" id="IPR000182">
    <property type="entry name" value="GNAT_dom"/>
</dbReference>
<dbReference type="InterPro" id="IPR017813">
    <property type="entry name" value="Mycothiol_AcTrfase"/>
</dbReference>
<dbReference type="NCBIfam" id="TIGR03448">
    <property type="entry name" value="mycothiol_MshD"/>
    <property type="match status" value="1"/>
</dbReference>
<dbReference type="PANTHER" id="PTHR43877:SF1">
    <property type="entry name" value="ACETYLTRANSFERASE"/>
    <property type="match status" value="1"/>
</dbReference>
<dbReference type="PANTHER" id="PTHR43877">
    <property type="entry name" value="AMINOALKYLPHOSPHONATE N-ACETYLTRANSFERASE-RELATED-RELATED"/>
    <property type="match status" value="1"/>
</dbReference>
<dbReference type="Pfam" id="PF00583">
    <property type="entry name" value="Acetyltransf_1"/>
    <property type="match status" value="1"/>
</dbReference>
<dbReference type="Pfam" id="PF13508">
    <property type="entry name" value="Acetyltransf_7"/>
    <property type="match status" value="1"/>
</dbReference>
<dbReference type="PIRSF" id="PIRSF021524">
    <property type="entry name" value="MSH_acetyltransferase"/>
    <property type="match status" value="1"/>
</dbReference>
<dbReference type="SUPFAM" id="SSF55729">
    <property type="entry name" value="Acyl-CoA N-acyltransferases (Nat)"/>
    <property type="match status" value="1"/>
</dbReference>
<dbReference type="PROSITE" id="PS51186">
    <property type="entry name" value="GNAT"/>
    <property type="match status" value="2"/>
</dbReference>
<proteinExistence type="inferred from homology"/>
<protein>
    <recommendedName>
        <fullName evidence="1">Mycothiol acetyltransferase</fullName>
        <shortName evidence="1">MSH acetyltransferase</shortName>
        <ecNumber evidence="1">2.3.1.189</ecNumber>
    </recommendedName>
    <alternativeName>
        <fullName evidence="1">Mycothiol synthase</fullName>
    </alternativeName>
</protein>
<evidence type="ECO:0000255" key="1">
    <source>
        <dbReference type="HAMAP-Rule" id="MF_01698"/>
    </source>
</evidence>
<accession>A8LDL3</accession>
<feature type="chain" id="PRO_0000400257" description="Mycothiol acetyltransferase">
    <location>
        <begin position="1"/>
        <end position="322"/>
    </location>
</feature>
<feature type="domain" description="N-acetyltransferase 1" evidence="1">
    <location>
        <begin position="5"/>
        <end position="150"/>
    </location>
</feature>
<feature type="domain" description="N-acetyltransferase 2" evidence="1">
    <location>
        <begin position="160"/>
        <end position="322"/>
    </location>
</feature>
<feature type="binding site" evidence="1">
    <location>
        <position position="36"/>
    </location>
    <ligand>
        <name>1D-myo-inositol 2-(L-cysteinylamino)-2-deoxy-alpha-D-glucopyranoside</name>
        <dbReference type="ChEBI" id="CHEBI:58887"/>
    </ligand>
</feature>
<feature type="binding site" evidence="1">
    <location>
        <begin position="79"/>
        <end position="81"/>
    </location>
    <ligand>
        <name>acetyl-CoA</name>
        <dbReference type="ChEBI" id="CHEBI:57288"/>
        <label>1</label>
    </ligand>
</feature>
<feature type="binding site" evidence="1">
    <location>
        <begin position="87"/>
        <end position="92"/>
    </location>
    <ligand>
        <name>acetyl-CoA</name>
        <dbReference type="ChEBI" id="CHEBI:57288"/>
        <label>1</label>
    </ligand>
</feature>
<feature type="binding site" evidence="1">
    <location>
        <position position="187"/>
    </location>
    <ligand>
        <name>1D-myo-inositol 2-(L-cysteinylamino)-2-deoxy-alpha-D-glucopyranoside</name>
        <dbReference type="ChEBI" id="CHEBI:58887"/>
    </ligand>
</feature>
<feature type="binding site" evidence="1">
    <location>
        <position position="226"/>
    </location>
    <ligand>
        <name>1D-myo-inositol 2-(L-cysteinylamino)-2-deoxy-alpha-D-glucopyranoside</name>
        <dbReference type="ChEBI" id="CHEBI:58887"/>
    </ligand>
</feature>
<feature type="binding site" evidence="1">
    <location>
        <position position="252"/>
    </location>
    <ligand>
        <name>1D-myo-inositol 2-(L-cysteinylamino)-2-deoxy-alpha-D-glucopyranoside</name>
        <dbReference type="ChEBI" id="CHEBI:58887"/>
    </ligand>
</feature>
<feature type="binding site" evidence="1">
    <location>
        <begin position="256"/>
        <end position="258"/>
    </location>
    <ligand>
        <name>acetyl-CoA</name>
        <dbReference type="ChEBI" id="CHEBI:57288"/>
        <label>2</label>
    </ligand>
</feature>
<feature type="binding site" evidence="1">
    <location>
        <position position="290"/>
    </location>
    <ligand>
        <name>1D-myo-inositol 2-(L-cysteinylamino)-2-deoxy-alpha-D-glucopyranoside</name>
        <dbReference type="ChEBI" id="CHEBI:58887"/>
    </ligand>
</feature>
<feature type="binding site" evidence="1">
    <location>
        <begin position="295"/>
        <end position="300"/>
    </location>
    <ligand>
        <name>acetyl-CoA</name>
        <dbReference type="ChEBI" id="CHEBI:57288"/>
        <label>2</label>
    </ligand>
</feature>
<reference key="1">
    <citation type="journal article" date="2007" name="Genome Res.">
        <title>Genome characteristics of facultatively symbiotic Frankia sp. strains reflect host range and host plant biogeography.</title>
        <authorList>
            <person name="Normand P."/>
            <person name="Lapierre P."/>
            <person name="Tisa L.S."/>
            <person name="Gogarten J.P."/>
            <person name="Alloisio N."/>
            <person name="Bagnarol E."/>
            <person name="Bassi C.A."/>
            <person name="Berry A.M."/>
            <person name="Bickhart D.M."/>
            <person name="Choisne N."/>
            <person name="Couloux A."/>
            <person name="Cournoyer B."/>
            <person name="Cruveiller S."/>
            <person name="Daubin V."/>
            <person name="Demange N."/>
            <person name="Francino M.P."/>
            <person name="Goltsman E."/>
            <person name="Huang Y."/>
            <person name="Kopp O.R."/>
            <person name="Labarre L."/>
            <person name="Lapidus A."/>
            <person name="Lavire C."/>
            <person name="Marechal J."/>
            <person name="Martinez M."/>
            <person name="Mastronunzio J.E."/>
            <person name="Mullin B.C."/>
            <person name="Niemann J."/>
            <person name="Pujic P."/>
            <person name="Rawnsley T."/>
            <person name="Rouy Z."/>
            <person name="Schenowitz C."/>
            <person name="Sellstedt A."/>
            <person name="Tavares F."/>
            <person name="Tomkins J.P."/>
            <person name="Vallenet D."/>
            <person name="Valverde C."/>
            <person name="Wall L.G."/>
            <person name="Wang Y."/>
            <person name="Medigue C."/>
            <person name="Benson D.R."/>
        </authorList>
    </citation>
    <scope>NUCLEOTIDE SEQUENCE [LARGE SCALE GENOMIC DNA]</scope>
    <source>
        <strain>EAN1pec</strain>
    </source>
</reference>
<name>MSHD_PARS2</name>
<sequence length="322" mass="34273">MTSLSWLRALDVADIAAITDLLAAAERADGNGGVSEDVRLTLRPGPVGGGVEHLVARAGSAVVGYAALGGTATERQAELVVHPDHRRRGVGTALVHALFATTSPVSLNIWAHGDTPAAAALATRNGFDRERVLLQLRRPLASVRPGDPDDLPRPIIPADVTIRAFEVGVDEEAWLAVNAEAFADHPEQGRWTLDDLRAREGEPWFDPAGFFLAERNGALLGFHWTKVHPQDPVPEHPAATDQPAGQPGPIGEVYVVGVASAAAGTGLGAALTIVGLRHLRDIGLASVMLYVDEDNARAVRLYTRLGFRRHAADVSYRRPARG</sequence>
<gene>
    <name evidence="1" type="primary">mshD</name>
    <name type="ordered locus">Franean1_6177</name>
</gene>
<comment type="function">
    <text evidence="1">Catalyzes the transfer of acetyl from acetyl-CoA to desacetylmycothiol (Cys-GlcN-Ins) to form mycothiol.</text>
</comment>
<comment type="catalytic activity">
    <reaction evidence="1">
        <text>1D-myo-inositol 2-(L-cysteinylamino)-2-deoxy-alpha-D-glucopyranoside + acetyl-CoA = mycothiol + CoA + H(+)</text>
        <dbReference type="Rhea" id="RHEA:26172"/>
        <dbReference type="ChEBI" id="CHEBI:15378"/>
        <dbReference type="ChEBI" id="CHEBI:16768"/>
        <dbReference type="ChEBI" id="CHEBI:57287"/>
        <dbReference type="ChEBI" id="CHEBI:57288"/>
        <dbReference type="ChEBI" id="CHEBI:58887"/>
        <dbReference type="EC" id="2.3.1.189"/>
    </reaction>
</comment>
<comment type="subunit">
    <text evidence="1">Monomer.</text>
</comment>
<comment type="similarity">
    <text evidence="1">Belongs to the acetyltransferase family. MshD subfamily.</text>
</comment>
<keyword id="KW-0012">Acyltransferase</keyword>
<keyword id="KW-0677">Repeat</keyword>
<keyword id="KW-0808">Transferase</keyword>